<organismHost>
    <name type="scientific">Mus musculus</name>
    <name type="common">Mouse</name>
    <dbReference type="NCBI Taxonomy" id="10090"/>
</organismHost>
<keyword id="KW-0106">Calcium</keyword>
<keyword id="KW-0479">Metal-binding</keyword>
<keyword id="KW-0553">Oncogene</keyword>
<keyword id="KW-0677">Repeat</keyword>
<sequence>ASAGGGCRRGPSFSPGSIPSLAAERAPDPPLAMAGNVKKSSGAGGGGSGGSGAGGLIGLMKDAFQPHHHHHHLSPHPPCTVDKKMVEKCWKLMDKVVRLCQNPNVALKNSPPYILDLLPDTYQHLRTVLSRYEGKMETLGENEYFRVFMENLMKKTKQTISLFKEGKERMYEENSQPRRNLTKLSLIFSHMLAELKGIFPSGLFQGDTFRITKADAAEFWRKAFGEKTIVPWKSFRQALHEVHPISSGLEAMALKSTIDLTCNDYISVFEFDIFTRLFQPWSSLLRNWNSLAVTHPGYMAFLTYDEVKARLQKFIHKPGSYIFRLSCTRLGQWAIGYVTADGNILQTIPHNKPLFQALIDGFREGFYLFPDGRNQNPDLTGLCEPTPHFS</sequence>
<comment type="function">
    <text>Induces early B-lineage lymphomas.</text>
</comment>
<comment type="domain">
    <text evidence="1">Is composed of the phosphotyrosine binding (PTB) domain, a short linker region and the RING-type zinc finger. The PTB domain, which is also called TKB (tyrosine kinase binding) domain, is composed of three different subdomains: a four-helix bundle (4H), a calcium-binding EF hand and a divergent SH2 domain (By similarity).</text>
</comment>
<comment type="miscellaneous">
    <text>This protein is synthesized as a Gag-Cbl polyprotein.</text>
</comment>
<comment type="miscellaneous">
    <text evidence="1">This protein has one functional calcium-binding site.</text>
</comment>
<comment type="sequence caution" evidence="5">
    <conflict type="erroneous initiation">
        <sequence resource="EMBL-CDS" id="AAA42885"/>
    </conflict>
</comment>
<reference key="1">
    <citation type="journal article" date="1989" name="Proc. Natl. Acad. Sci. U.S.A.">
        <title>v-cbl, an oncogene from a dual-recombinant murine retrovirus that induces early B-lineage lymphomas.</title>
        <authorList>
            <person name="Langdon W.Y."/>
            <person name="Hartley J.W."/>
            <person name="Klinken S.P."/>
            <person name="Ruscetti S.K."/>
            <person name="Morse H.C. III"/>
        </authorList>
    </citation>
    <scope>NUCLEOTIDE SEQUENCE [GENOMIC DNA]</scope>
</reference>
<proteinExistence type="inferred from homology"/>
<name>CBL_MLVCN</name>
<evidence type="ECO:0000250" key="1"/>
<evidence type="ECO:0000250" key="2">
    <source>
        <dbReference type="UniProtKB" id="P22681"/>
    </source>
</evidence>
<evidence type="ECO:0000255" key="3">
    <source>
        <dbReference type="PROSITE-ProRule" id="PRU00839"/>
    </source>
</evidence>
<evidence type="ECO:0000256" key="4">
    <source>
        <dbReference type="SAM" id="MobiDB-lite"/>
    </source>
</evidence>
<evidence type="ECO:0000305" key="5"/>
<dbReference type="EMBL" id="J04169">
    <property type="protein sequence ID" value="AAA42885.1"/>
    <property type="status" value="ALT_INIT"/>
    <property type="molecule type" value="Genomic_DNA"/>
</dbReference>
<dbReference type="SMR" id="P23092"/>
<dbReference type="GO" id="GO:0045121">
    <property type="term" value="C:membrane raft"/>
    <property type="evidence" value="ECO:0007669"/>
    <property type="project" value="TreeGrafter"/>
</dbReference>
<dbReference type="GO" id="GO:0005886">
    <property type="term" value="C:plasma membrane"/>
    <property type="evidence" value="ECO:0007669"/>
    <property type="project" value="TreeGrafter"/>
</dbReference>
<dbReference type="GO" id="GO:0005509">
    <property type="term" value="F:calcium ion binding"/>
    <property type="evidence" value="ECO:0007669"/>
    <property type="project" value="InterPro"/>
</dbReference>
<dbReference type="GO" id="GO:0001784">
    <property type="term" value="F:phosphotyrosine residue binding"/>
    <property type="evidence" value="ECO:0007669"/>
    <property type="project" value="InterPro"/>
</dbReference>
<dbReference type="GO" id="GO:0030971">
    <property type="term" value="F:receptor tyrosine kinase binding"/>
    <property type="evidence" value="ECO:0007669"/>
    <property type="project" value="TreeGrafter"/>
</dbReference>
<dbReference type="GO" id="GO:0017124">
    <property type="term" value="F:SH3 domain binding"/>
    <property type="evidence" value="ECO:0007669"/>
    <property type="project" value="TreeGrafter"/>
</dbReference>
<dbReference type="GO" id="GO:0061630">
    <property type="term" value="F:ubiquitin protein ligase activity"/>
    <property type="evidence" value="ECO:0007669"/>
    <property type="project" value="TreeGrafter"/>
</dbReference>
<dbReference type="GO" id="GO:0007166">
    <property type="term" value="P:cell surface receptor signaling pathway"/>
    <property type="evidence" value="ECO:0007669"/>
    <property type="project" value="InterPro"/>
</dbReference>
<dbReference type="GO" id="GO:0023051">
    <property type="term" value="P:regulation of signaling"/>
    <property type="evidence" value="ECO:0007669"/>
    <property type="project" value="InterPro"/>
</dbReference>
<dbReference type="CDD" id="cd09920">
    <property type="entry name" value="SH2_Cbl-b_TKB"/>
    <property type="match status" value="1"/>
</dbReference>
<dbReference type="FunFam" id="1.10.238.10:FF:000022">
    <property type="entry name" value="E3 ubiquitin-protein ligase CBL"/>
    <property type="match status" value="1"/>
</dbReference>
<dbReference type="FunFam" id="1.20.930.20:FF:000001">
    <property type="entry name" value="E3 ubiquitin-protein ligase CBL"/>
    <property type="match status" value="1"/>
</dbReference>
<dbReference type="FunFam" id="3.30.505.10:FF:000154">
    <property type="entry name" value="E3 ubiquitin-protein ligase CBL"/>
    <property type="match status" value="1"/>
</dbReference>
<dbReference type="Gene3D" id="1.20.930.20">
    <property type="entry name" value="Adaptor protein Cbl, N-terminal domain"/>
    <property type="match status" value="1"/>
</dbReference>
<dbReference type="Gene3D" id="1.10.238.10">
    <property type="entry name" value="EF-hand"/>
    <property type="match status" value="1"/>
</dbReference>
<dbReference type="Gene3D" id="3.30.505.10">
    <property type="entry name" value="SH2 domain"/>
    <property type="match status" value="1"/>
</dbReference>
<dbReference type="InterPro" id="IPR024162">
    <property type="entry name" value="Adaptor_Cbl"/>
</dbReference>
<dbReference type="InterPro" id="IPR014741">
    <property type="entry name" value="Adaptor_Cbl_EF_hand-like"/>
</dbReference>
<dbReference type="InterPro" id="IPR036537">
    <property type="entry name" value="Adaptor_Cbl_N_dom_sf"/>
</dbReference>
<dbReference type="InterPro" id="IPR003153">
    <property type="entry name" value="Adaptor_Cbl_N_hlx"/>
</dbReference>
<dbReference type="InterPro" id="IPR014742">
    <property type="entry name" value="Adaptor_Cbl_SH2-like"/>
</dbReference>
<dbReference type="InterPro" id="IPR024159">
    <property type="entry name" value="Cbl_PTB"/>
</dbReference>
<dbReference type="InterPro" id="IPR011992">
    <property type="entry name" value="EF-hand-dom_pair"/>
</dbReference>
<dbReference type="InterPro" id="IPR036860">
    <property type="entry name" value="SH2_dom_sf"/>
</dbReference>
<dbReference type="PANTHER" id="PTHR23007">
    <property type="entry name" value="CBL"/>
    <property type="match status" value="1"/>
</dbReference>
<dbReference type="PANTHER" id="PTHR23007:SF5">
    <property type="entry name" value="E3 UBIQUITIN-PROTEIN LIGASE CBL"/>
    <property type="match status" value="1"/>
</dbReference>
<dbReference type="Pfam" id="PF02262">
    <property type="entry name" value="Cbl_N"/>
    <property type="match status" value="1"/>
</dbReference>
<dbReference type="Pfam" id="PF02761">
    <property type="entry name" value="Cbl_N2"/>
    <property type="match status" value="1"/>
</dbReference>
<dbReference type="Pfam" id="PF02762">
    <property type="entry name" value="Cbl_N3"/>
    <property type="match status" value="1"/>
</dbReference>
<dbReference type="SUPFAM" id="SSF47473">
    <property type="entry name" value="EF-hand"/>
    <property type="match status" value="1"/>
</dbReference>
<dbReference type="SUPFAM" id="SSF47668">
    <property type="entry name" value="N-terminal domain of cbl (N-cbl)"/>
    <property type="match status" value="1"/>
</dbReference>
<dbReference type="SUPFAM" id="SSF55550">
    <property type="entry name" value="SH2 domain"/>
    <property type="match status" value="1"/>
</dbReference>
<dbReference type="PROSITE" id="PS51506">
    <property type="entry name" value="CBL_PTB"/>
    <property type="match status" value="1"/>
</dbReference>
<accession>P23092</accession>
<protein>
    <recommendedName>
        <fullName>Transforming protein cbl</fullName>
    </recommendedName>
</protein>
<organism>
    <name type="scientific">Cas-NS-1 murine leukemia virus</name>
    <dbReference type="NCBI Taxonomy" id="11793"/>
    <lineage>
        <taxon>Viruses</taxon>
        <taxon>Riboviria</taxon>
        <taxon>Pararnavirae</taxon>
        <taxon>Artverviricota</taxon>
        <taxon>Revtraviricetes</taxon>
        <taxon>Ortervirales</taxon>
        <taxon>Retroviridae</taxon>
        <taxon>Orthoretrovirinae</taxon>
        <taxon>Gammaretrovirus</taxon>
        <taxon>Murine leukemia virus</taxon>
    </lineage>
</organism>
<gene>
    <name type="primary">V-CBL</name>
</gene>
<feature type="chain" id="PRO_0000055868" description="Transforming protein cbl">
    <location>
        <begin position="1"/>
        <end position="390"/>
    </location>
</feature>
<feature type="domain" description="Cbl-PTB" evidence="3">
    <location>
        <begin position="77"/>
        <end position="381"/>
    </location>
</feature>
<feature type="region of interest" description="Disordered" evidence="4">
    <location>
        <begin position="1"/>
        <end position="52"/>
    </location>
</feature>
<feature type="region of interest" description="4H">
    <location>
        <begin position="77"/>
        <end position="205"/>
    </location>
</feature>
<feature type="region of interest" description="EF-hand-like">
    <location>
        <begin position="206"/>
        <end position="278"/>
    </location>
</feature>
<feature type="region of interest" description="SH2-like">
    <location>
        <begin position="279"/>
        <end position="381"/>
    </location>
</feature>
<feature type="compositionally biased region" description="Gly residues" evidence="4">
    <location>
        <begin position="42"/>
        <end position="52"/>
    </location>
</feature>
<feature type="binding site" evidence="2">
    <location>
        <position position="259"/>
    </location>
    <ligand>
        <name>Ca(2+)</name>
        <dbReference type="ChEBI" id="CHEBI:29108"/>
    </ligand>
</feature>
<feature type="binding site" evidence="2">
    <location>
        <position position="261"/>
    </location>
    <ligand>
        <name>Ca(2+)</name>
        <dbReference type="ChEBI" id="CHEBI:29108"/>
    </ligand>
</feature>
<feature type="binding site" evidence="2">
    <location>
        <position position="263"/>
    </location>
    <ligand>
        <name>Ca(2+)</name>
        <dbReference type="ChEBI" id="CHEBI:29108"/>
    </ligand>
</feature>
<feature type="binding site" evidence="2">
    <location>
        <position position="265"/>
    </location>
    <ligand>
        <name>Ca(2+)</name>
        <dbReference type="ChEBI" id="CHEBI:29108"/>
    </ligand>
</feature>
<feature type="binding site" evidence="2">
    <location>
        <position position="270"/>
    </location>
    <ligand>
        <name>Ca(2+)</name>
        <dbReference type="ChEBI" id="CHEBI:29108"/>
    </ligand>
</feature>
<feature type="binding site" evidence="1">
    <location>
        <position position="324"/>
    </location>
    <ligand>
        <name>4-O-phospho-L-tyrosine</name>
        <dbReference type="ChEBI" id="CHEBI:62338"/>
    </ligand>
</feature>